<organism>
    <name type="scientific">Rotavirus A (strain RVA/Chicken/Ireland/Ch2/1979/G7P[X])</name>
    <name type="common">RV-A</name>
    <name type="synonym">Rotavirus A (strain Ch-2)</name>
    <dbReference type="NCBI Taxonomy" id="31589"/>
    <lineage>
        <taxon>Viruses</taxon>
        <taxon>Riboviria</taxon>
        <taxon>Orthornavirae</taxon>
        <taxon>Duplornaviricota</taxon>
        <taxon>Resentoviricetes</taxon>
        <taxon>Reovirales</taxon>
        <taxon>Sedoreoviridae</taxon>
        <taxon>Rotavirus</taxon>
        <taxon>Rotavirus A</taxon>
    </lineage>
</organism>
<sequence length="329" mass="37617">MYSTKCTNFFLEIIFYVIFCTLFLLVLEKMSKLLSWIVIVCLFVFAISSKCSAQNYGINVPITGSMDVVLANSTQDQIGLTSTLCIYYPKAADTEIADPEWKATVTQLLLTKGWPTTSVYLNEYQDLVTFSNDPKLYCDYNIVLAHYTNDVALDISELAEFLLYEWLCNPMDVTLYYYQQTSEPNKWIAMGTNCTIKVCPLNTQTLGIGCQTTNTDTFEILTMSEKLAIIDVVDGVNHKVDYTVATCKINNCIRLNPRENVAIIQVGGPEVLDISENPMVIPKVSRMTRMNWKKWWQVFYTIVDYINTIITTMSKRSRSLDVSSYYYRV</sequence>
<keyword id="KW-0106">Calcium</keyword>
<keyword id="KW-0167">Capsid protein</keyword>
<keyword id="KW-1015">Disulfide bond</keyword>
<keyword id="KW-0325">Glycoprotein</keyword>
<keyword id="KW-1038">Host endoplasmic reticulum</keyword>
<keyword id="KW-0945">Host-virus interaction</keyword>
<keyword id="KW-0479">Metal-binding</keyword>
<keyword id="KW-1152">Outer capsid protein</keyword>
<keyword id="KW-0732">Signal</keyword>
<keyword id="KW-1146">T=13 icosahedral capsid protein</keyword>
<keyword id="KW-0946">Virion</keyword>
<name>VP7_ROTCC</name>
<feature type="signal peptide" evidence="2">
    <location>
        <begin position="1"/>
        <end position="53"/>
    </location>
</feature>
<feature type="chain" id="PRO_0000149588" description="Outer capsid glycoprotein VP7" evidence="2">
    <location>
        <begin position="54"/>
        <end position="329"/>
    </location>
</feature>
<feature type="region of interest" description="CNP motif; interaction with ITGAV/ITGB3" evidence="2">
    <location>
        <begin position="168"/>
        <end position="170"/>
    </location>
</feature>
<feature type="binding site" evidence="2">
    <location>
        <position position="98"/>
    </location>
    <ligand>
        <name>Ca(2+)</name>
        <dbReference type="ChEBI" id="CHEBI:29108"/>
        <label>1</label>
    </ligand>
</feature>
<feature type="binding site" evidence="2">
    <location>
        <position position="180"/>
    </location>
    <ligand>
        <name>Ca(2+)</name>
        <dbReference type="ChEBI" id="CHEBI:29108"/>
        <label>2</label>
    </ligand>
</feature>
<feature type="binding site" evidence="2">
    <location>
        <position position="209"/>
    </location>
    <ligand>
        <name>Ca(2+)</name>
        <dbReference type="ChEBI" id="CHEBI:29108"/>
        <label>1</label>
    </ligand>
</feature>
<feature type="binding site" evidence="2">
    <location>
        <position position="217"/>
    </location>
    <ligand>
        <name>Ca(2+)</name>
        <dbReference type="ChEBI" id="CHEBI:29108"/>
        <label>1</label>
    </ligand>
</feature>
<feature type="binding site" evidence="2">
    <location>
        <position position="219"/>
    </location>
    <ligand>
        <name>Ca(2+)</name>
        <dbReference type="ChEBI" id="CHEBI:29108"/>
        <label>1</label>
    </ligand>
</feature>
<feature type="binding site" evidence="2">
    <location>
        <position position="231"/>
    </location>
    <ligand>
        <name>Ca(2+)</name>
        <dbReference type="ChEBI" id="CHEBI:29108"/>
        <label>2</label>
    </ligand>
</feature>
<feature type="binding site" evidence="2">
    <location>
        <position position="232"/>
    </location>
    <ligand>
        <name>Ca(2+)</name>
        <dbReference type="ChEBI" id="CHEBI:29108"/>
        <label>2</label>
    </ligand>
</feature>
<feature type="binding site" evidence="2">
    <location>
        <position position="234"/>
    </location>
    <ligand>
        <name>Ca(2+)</name>
        <dbReference type="ChEBI" id="CHEBI:29108"/>
        <label>2</label>
    </ligand>
</feature>
<feature type="binding site" evidence="2">
    <location>
        <position position="304"/>
    </location>
    <ligand>
        <name>Ca(2+)</name>
        <dbReference type="ChEBI" id="CHEBI:29108"/>
        <label>2</label>
    </ligand>
</feature>
<feature type="glycosylation site" description="N-linked (GlcNAc...) asparagine; by host" evidence="1">
    <location>
        <position position="72"/>
    </location>
</feature>
<feature type="glycosylation site" description="N-linked (GlcNAc...) asparagine; by host" evidence="1">
    <location>
        <position position="193"/>
    </location>
</feature>
<feature type="disulfide bond" evidence="2">
    <location>
        <begin position="85"/>
        <end position="138"/>
    </location>
</feature>
<feature type="disulfide bond" evidence="2">
    <location>
        <begin position="168"/>
        <end position="252"/>
    </location>
</feature>
<feature type="disulfide bond" evidence="2">
    <location>
        <begin position="194"/>
        <end position="247"/>
    </location>
</feature>
<feature type="disulfide bond" evidence="2">
    <location>
        <begin position="199"/>
        <end position="210"/>
    </location>
</feature>
<reference key="1">
    <citation type="journal article" date="1991" name="Virology">
        <title>Sequence of the VP7 gene of chicken rotavirus Ch2 strain of serotype 7 rotavirus.</title>
        <authorList>
            <person name="Nishikawa K."/>
            <person name="Hoshino Y."/>
            <person name="Gorziglia M."/>
        </authorList>
    </citation>
    <scope>NUCLEOTIDE SEQUENCE [MRNA]</scope>
</reference>
<dbReference type="EMBL" id="X56784">
    <property type="protein sequence ID" value="CAA40104.1"/>
    <property type="molecule type" value="mRNA"/>
</dbReference>
<dbReference type="PIR" id="A41703">
    <property type="entry name" value="VGXRC2"/>
</dbReference>
<dbReference type="SMR" id="P29821"/>
<dbReference type="GO" id="GO:0044166">
    <property type="term" value="C:host cell endoplasmic reticulum lumen"/>
    <property type="evidence" value="ECO:0007669"/>
    <property type="project" value="UniProtKB-SubCell"/>
</dbReference>
<dbReference type="GO" id="GO:0039621">
    <property type="term" value="C:T=13 icosahedral viral capsid"/>
    <property type="evidence" value="ECO:0007669"/>
    <property type="project" value="UniProtKB-UniRule"/>
</dbReference>
<dbReference type="GO" id="GO:0039624">
    <property type="term" value="C:viral outer capsid"/>
    <property type="evidence" value="ECO:0007669"/>
    <property type="project" value="UniProtKB-UniRule"/>
</dbReference>
<dbReference type="GO" id="GO:0046872">
    <property type="term" value="F:metal ion binding"/>
    <property type="evidence" value="ECO:0007669"/>
    <property type="project" value="UniProtKB-KW"/>
</dbReference>
<dbReference type="Gene3D" id="3.40.50.11130">
    <property type="entry name" value="Glycoprotein VP7, domain 1"/>
    <property type="match status" value="1"/>
</dbReference>
<dbReference type="Gene3D" id="2.60.120.800">
    <property type="entry name" value="Rotavirus outer-layer protein VP7, domain 2"/>
    <property type="match status" value="1"/>
</dbReference>
<dbReference type="HAMAP" id="MF_04130">
    <property type="entry name" value="Rota_VP7"/>
    <property type="match status" value="1"/>
</dbReference>
<dbReference type="HAMAP" id="MF_04131">
    <property type="entry name" value="Rota_VP7_A"/>
    <property type="match status" value="1"/>
</dbReference>
<dbReference type="InterPro" id="IPR001963">
    <property type="entry name" value="VP7"/>
</dbReference>
<dbReference type="InterPro" id="IPR042207">
    <property type="entry name" value="VP7_1"/>
</dbReference>
<dbReference type="InterPro" id="IPR042210">
    <property type="entry name" value="VP7_2"/>
</dbReference>
<dbReference type="Pfam" id="PF00434">
    <property type="entry name" value="VP7"/>
    <property type="match status" value="1"/>
</dbReference>
<comment type="function">
    <text evidence="2">Calcium-binding protein that interacts with rotavirus cell receptors once the initial attachment by VP4 has been achieved. Rotavirus attachment and entry into the host cell probably involves multiple sequential contacts between the outer capsid proteins VP4 and VP7, and the cell receptors. Following entry into the host cell, low intracellular or intravesicular Ca(2+) concentration probably causes the calcium-stabilized VP7 trimers to dissociate from the virion. This step is probably necessary for the membrane-disrupting entry step and the release of VP4, which is locked onto the virion by VP7.</text>
</comment>
<comment type="subunit">
    <text evidence="2">Homotrimer; disulfide-linked. 2 Ca(2+) ions bound at each subunit interface in the trimer hold the trimer together. Interacts with the intermediate capsid protein VP6. Interacts with the outer capsid protein VP5*.</text>
</comment>
<comment type="subcellular location">
    <subcellularLocation>
        <location evidence="2">Virion</location>
    </subcellularLocation>
    <subcellularLocation>
        <location evidence="2">Host endoplasmic reticulum lumen</location>
    </subcellularLocation>
    <text evidence="2">The outer layer contains 780 copies of VP7, grouped as 260 trimers. Immature double-layered particles assembled in the cytoplasm bud across the membrane of the endoplasmic reticulum, acquiring during this process a transient lipid membrane that is modified with the ER resident viral glycoproteins NSP4 and VP7; these enveloped particles also contain VP4. As the particles move towards the interior of the ER cisternae, the transient lipid membrane and the non-structural protein NSP4 are lost, while the virus surface proteins VP4 and VP7 rearrange to form the outermost virus protein layer, yielding mature infectious triple-layered particles.</text>
</comment>
<comment type="PTM">
    <text evidence="2">N-glycosylated.</text>
</comment>
<comment type="PTM">
    <text evidence="2">The N-terminus is blocked possibly by pyroglutamic acid.</text>
</comment>
<comment type="miscellaneous">
    <text evidence="2">Some rotavirus strains are neuraminidase-sensitive and require sialic acid to attach to the cell surface. Some rotavirus strains are integrin-dependent. Some rotavirus strains depend on ganglioside for their entry into the host cell. Hsp70 also seems to be involved in the entry of some strains.</text>
</comment>
<comment type="miscellaneous">
    <text evidence="2">In group A rotaviruses, VP7 defines the G serotype.</text>
</comment>
<comment type="similarity">
    <text evidence="2">Belongs to the rotavirus VP7 family.</text>
</comment>
<evidence type="ECO:0000255" key="1"/>
<evidence type="ECO:0000255" key="2">
    <source>
        <dbReference type="HAMAP-Rule" id="MF_04131"/>
    </source>
</evidence>
<organismHost>
    <name type="scientific">Gallus gallus</name>
    <name type="common">Chicken</name>
    <dbReference type="NCBI Taxonomy" id="9031"/>
</organismHost>
<protein>
    <recommendedName>
        <fullName evidence="2">Outer capsid glycoprotein VP7</fullName>
    </recommendedName>
</protein>
<proteinExistence type="evidence at transcript level"/>
<accession>P29821</accession>